<dbReference type="EMBL" id="X59038">
    <property type="protein sequence ID" value="CAA41762.1"/>
    <property type="molecule type" value="Genomic_DNA"/>
</dbReference>
<dbReference type="EMBL" id="CP000077">
    <property type="protein sequence ID" value="AAY80780.1"/>
    <property type="molecule type" value="Genomic_DNA"/>
</dbReference>
<dbReference type="PIR" id="S53648">
    <property type="entry name" value="S53648"/>
</dbReference>
<dbReference type="RefSeq" id="WP_011278282.1">
    <property type="nucleotide sequence ID" value="NC_007181.1"/>
</dbReference>
<dbReference type="SMR" id="P35025"/>
<dbReference type="STRING" id="330779.Saci_1459"/>
<dbReference type="GeneID" id="14551954"/>
<dbReference type="KEGG" id="sai:Saci_1459"/>
<dbReference type="PATRIC" id="fig|330779.12.peg.1403"/>
<dbReference type="eggNOG" id="arCOG04372">
    <property type="taxonomic scope" value="Archaea"/>
</dbReference>
<dbReference type="HOGENOM" id="CLU_074237_4_0_2"/>
<dbReference type="Proteomes" id="UP000001018">
    <property type="component" value="Chromosome"/>
</dbReference>
<dbReference type="GO" id="GO:0015934">
    <property type="term" value="C:large ribosomal subunit"/>
    <property type="evidence" value="ECO:0007669"/>
    <property type="project" value="TreeGrafter"/>
</dbReference>
<dbReference type="GO" id="GO:0070180">
    <property type="term" value="F:large ribosomal subunit rRNA binding"/>
    <property type="evidence" value="ECO:0007669"/>
    <property type="project" value="UniProtKB-UniRule"/>
</dbReference>
<dbReference type="GO" id="GO:0003735">
    <property type="term" value="F:structural constituent of ribosome"/>
    <property type="evidence" value="ECO:0007669"/>
    <property type="project" value="InterPro"/>
</dbReference>
<dbReference type="GO" id="GO:0006412">
    <property type="term" value="P:translation"/>
    <property type="evidence" value="ECO:0007669"/>
    <property type="project" value="UniProtKB-UniRule"/>
</dbReference>
<dbReference type="CDD" id="cd00349">
    <property type="entry name" value="Ribosomal_L11"/>
    <property type="match status" value="1"/>
</dbReference>
<dbReference type="FunFam" id="3.30.1550.10:FF:000007">
    <property type="entry name" value="50S ribosomal protein L11"/>
    <property type="match status" value="1"/>
</dbReference>
<dbReference type="Gene3D" id="1.10.10.250">
    <property type="entry name" value="Ribosomal protein L11, C-terminal domain"/>
    <property type="match status" value="1"/>
</dbReference>
<dbReference type="Gene3D" id="3.30.1550.10">
    <property type="entry name" value="Ribosomal protein L11/L12, N-terminal domain"/>
    <property type="match status" value="1"/>
</dbReference>
<dbReference type="HAMAP" id="MF_00736">
    <property type="entry name" value="Ribosomal_uL11"/>
    <property type="match status" value="1"/>
</dbReference>
<dbReference type="InterPro" id="IPR000911">
    <property type="entry name" value="Ribosomal_uL11"/>
</dbReference>
<dbReference type="InterPro" id="IPR020783">
    <property type="entry name" value="Ribosomal_uL11_C"/>
</dbReference>
<dbReference type="InterPro" id="IPR036769">
    <property type="entry name" value="Ribosomal_uL11_C_sf"/>
</dbReference>
<dbReference type="InterPro" id="IPR020785">
    <property type="entry name" value="Ribosomal_uL11_CS"/>
</dbReference>
<dbReference type="InterPro" id="IPR020784">
    <property type="entry name" value="Ribosomal_uL11_N"/>
</dbReference>
<dbReference type="InterPro" id="IPR036796">
    <property type="entry name" value="Ribosomal_uL11_N_sf"/>
</dbReference>
<dbReference type="NCBIfam" id="NF002232">
    <property type="entry name" value="PRK01143.1"/>
    <property type="match status" value="1"/>
</dbReference>
<dbReference type="PANTHER" id="PTHR11661">
    <property type="entry name" value="60S RIBOSOMAL PROTEIN L12"/>
    <property type="match status" value="1"/>
</dbReference>
<dbReference type="PANTHER" id="PTHR11661:SF1">
    <property type="entry name" value="LARGE RIBOSOMAL SUBUNIT PROTEIN UL11M"/>
    <property type="match status" value="1"/>
</dbReference>
<dbReference type="Pfam" id="PF00298">
    <property type="entry name" value="Ribosomal_L11"/>
    <property type="match status" value="1"/>
</dbReference>
<dbReference type="Pfam" id="PF03946">
    <property type="entry name" value="Ribosomal_L11_N"/>
    <property type="match status" value="1"/>
</dbReference>
<dbReference type="SMART" id="SM00649">
    <property type="entry name" value="RL11"/>
    <property type="match status" value="1"/>
</dbReference>
<dbReference type="SUPFAM" id="SSF54747">
    <property type="entry name" value="Ribosomal L11/L12e N-terminal domain"/>
    <property type="match status" value="1"/>
</dbReference>
<dbReference type="SUPFAM" id="SSF46906">
    <property type="entry name" value="Ribosomal protein L11, C-terminal domain"/>
    <property type="match status" value="1"/>
</dbReference>
<dbReference type="PROSITE" id="PS00359">
    <property type="entry name" value="RIBOSOMAL_L11"/>
    <property type="match status" value="1"/>
</dbReference>
<organism>
    <name type="scientific">Sulfolobus acidocaldarius (strain ATCC 33909 / DSM 639 / JCM 8929 / NBRC 15157 / NCIMB 11770)</name>
    <dbReference type="NCBI Taxonomy" id="330779"/>
    <lineage>
        <taxon>Archaea</taxon>
        <taxon>Thermoproteota</taxon>
        <taxon>Thermoprotei</taxon>
        <taxon>Sulfolobales</taxon>
        <taxon>Sulfolobaceae</taxon>
        <taxon>Sulfolobus</taxon>
    </lineage>
</organism>
<evidence type="ECO:0000255" key="1">
    <source>
        <dbReference type="HAMAP-Rule" id="MF_00736"/>
    </source>
</evidence>
<evidence type="ECO:0000269" key="2">
    <source>
    </source>
</evidence>
<evidence type="ECO:0000305" key="3"/>
<evidence type="ECO:0000305" key="4">
    <source>
    </source>
</evidence>
<gene>
    <name evidence="1" type="primary">rpl11</name>
    <name type="ordered locus">Saci_1459</name>
</gene>
<keyword id="KW-0903">Direct protein sequencing</keyword>
<keyword id="KW-1185">Reference proteome</keyword>
<keyword id="KW-0687">Ribonucleoprotein</keyword>
<keyword id="KW-0689">Ribosomal protein</keyword>
<keyword id="KW-0694">RNA-binding</keyword>
<keyword id="KW-0699">rRNA-binding</keyword>
<sequence>MPTKTIKIMVEGGSAKPGPPLGPTLSQLGLNVQEVVKKINDVTAQFKGMSVPVTIEIDSSTKKYDIKVGVPTTTSLLLKAINAQEPSGDPAHKKIGNLDLEQIADIAIKKKPQLSAKTLTAAIKSLLGTARSIGITVEGKDPKDVIKEIDQGKYNDLLTNYEQKWNEAEG</sequence>
<name>RL11_SULAC</name>
<proteinExistence type="evidence at protein level"/>
<comment type="function">
    <text evidence="1">Forms part of the ribosomal stalk which helps the ribosome interact with GTP-bound translation factors.</text>
</comment>
<comment type="subunit">
    <text evidence="1">Part of the ribosomal stalk of the 50S ribosomal subunit. Interacts with L10 and the large rRNA to form the base of the stalk. L10 forms an elongated spine to which L12 dimers bind in a sequential fashion forming a multimeric L10(L12)X complex.</text>
</comment>
<comment type="similarity">
    <text evidence="1">Belongs to the universal ribosomal protein uL11 family.</text>
</comment>
<comment type="caution">
    <text evidence="4">Was originally thought to originate from S.solfataricus strain P1, but the culture was contaminated with S.acidocaldarius.</text>
</comment>
<reference key="1">
    <citation type="journal article" date="1994" name="J. Mol. Biol.">
        <title>Structure and transcription of the L11-L1-L10-L12 ribosomal protein gene operon from the extreme thermophilic archaeon Sulfolobus acidocaldarius.</title>
        <authorList>
            <person name="Ramirez C."/>
            <person name="Shimmin L.C."/>
            <person name="Leggatt P."/>
            <person name="Matheson A.T."/>
        </authorList>
    </citation>
    <scope>NUCLEOTIDE SEQUENCE [GENOMIC DNA]</scope>
</reference>
<reference key="2">
    <citation type="journal article" date="1989" name="Can. J. Microbiol.">
        <title>Structure and evolution of the L11, L1, L10, and L12 equivalent ribosomal proteins in eubacteria, archaebacteria, and eucaryotes.</title>
        <authorList>
            <person name="Ramirez C."/>
            <person name="Shimmin L.C."/>
            <person name="Newton C.H."/>
            <person name="Matheson A.T."/>
            <person name="Dennis P.P."/>
        </authorList>
    </citation>
    <scope>NUCLEOTIDE SEQUENCE [GENOMIC DNA]</scope>
</reference>
<reference key="3">
    <citation type="journal article" date="1989" name="Can. J. Microbiol.">
        <authorList>
            <person name="Ramirez C."/>
            <person name="Shimmin L.C."/>
            <person name="Newton C.H."/>
            <person name="Matheson A.T."/>
            <person name="Dennis P.P."/>
        </authorList>
    </citation>
    <scope>ERRATUM OF PUBMED:2497941</scope>
</reference>
<reference key="4">
    <citation type="journal article" date="2005" name="J. Bacteriol.">
        <title>The genome of Sulfolobus acidocaldarius, a model organism of the Crenarchaeota.</title>
        <authorList>
            <person name="Chen L."/>
            <person name="Bruegger K."/>
            <person name="Skovgaard M."/>
            <person name="Redder P."/>
            <person name="She Q."/>
            <person name="Torarinsson E."/>
            <person name="Greve B."/>
            <person name="Awayez M."/>
            <person name="Zibat A."/>
            <person name="Klenk H.-P."/>
            <person name="Garrett R.A."/>
        </authorList>
    </citation>
    <scope>NUCLEOTIDE SEQUENCE [LARGE SCALE GENOMIC DNA]</scope>
    <source>
        <strain>ATCC 33909 / DSM 639 / JCM 8929 / NBRC 15157 / NCIMB 11770</strain>
    </source>
</reference>
<reference key="5">
    <citation type="journal article" date="1991" name="J. Biol. Chem.">
        <title>Protein topography of Sulfolobus solfataricus ribosomes by cross-linking with 2-iminothiolane. Sso L12e, Sso L10e, and Sso L11e are neighbors.</title>
        <authorList>
            <person name="Casiano C."/>
            <person name="Traut R.R."/>
        </authorList>
    </citation>
    <scope>PROTEIN SEQUENCE OF 2-25</scope>
</reference>
<feature type="initiator methionine" description="Removed" evidence="2">
    <location>
        <position position="1"/>
    </location>
</feature>
<feature type="chain" id="PRO_0000104447" description="Large ribosomal subunit protein uL11">
    <location>
        <begin position="2"/>
        <end position="170"/>
    </location>
</feature>
<protein>
    <recommendedName>
        <fullName evidence="1">Large ribosomal subunit protein uL11</fullName>
    </recommendedName>
    <alternativeName>
        <fullName evidence="3">50S ribosomal protein L11</fullName>
    </alternativeName>
</protein>
<accession>P35025</accession>
<accession>Q4J8V0</accession>
<accession>Q9UWM7</accession>